<comment type="function">
    <text evidence="1">Endonuclease that specifically degrades the RNA of RNA-DNA hybrids.</text>
</comment>
<comment type="catalytic activity">
    <reaction evidence="1">
        <text>Endonucleolytic cleavage to 5'-phosphomonoester.</text>
        <dbReference type="EC" id="3.1.26.4"/>
    </reaction>
</comment>
<comment type="cofactor">
    <cofactor evidence="1">
        <name>Mg(2+)</name>
        <dbReference type="ChEBI" id="CHEBI:18420"/>
    </cofactor>
    <text evidence="1">Binds 1 Mg(2+) ion per subunit. May bind a second metal ion at a regulatory site, or after substrate binding.</text>
</comment>
<comment type="subunit">
    <text evidence="1">Monomer.</text>
</comment>
<comment type="subcellular location">
    <subcellularLocation>
        <location evidence="1">Cytoplasm</location>
    </subcellularLocation>
</comment>
<comment type="similarity">
    <text evidence="1">Belongs to the RNase H family.</text>
</comment>
<proteinExistence type="inferred from homology"/>
<evidence type="ECO:0000255" key="1">
    <source>
        <dbReference type="HAMAP-Rule" id="MF_00042"/>
    </source>
</evidence>
<evidence type="ECO:0000255" key="2">
    <source>
        <dbReference type="PROSITE-ProRule" id="PRU00408"/>
    </source>
</evidence>
<protein>
    <recommendedName>
        <fullName evidence="1">Ribonuclease H</fullName>
        <shortName evidence="1">RNase H</shortName>
        <ecNumber evidence="1">3.1.26.4</ecNumber>
    </recommendedName>
</protein>
<reference key="1">
    <citation type="submission" date="2006-03" db="EMBL/GenBank/DDBJ databases">
        <title>Complete sequence of Rhodopseudomonas palustris BisB5.</title>
        <authorList>
            <consortium name="US DOE Joint Genome Institute"/>
            <person name="Copeland A."/>
            <person name="Lucas S."/>
            <person name="Lapidus A."/>
            <person name="Barry K."/>
            <person name="Detter J.C."/>
            <person name="Glavina del Rio T."/>
            <person name="Hammon N."/>
            <person name="Israni S."/>
            <person name="Dalin E."/>
            <person name="Tice H."/>
            <person name="Pitluck S."/>
            <person name="Chain P."/>
            <person name="Malfatti S."/>
            <person name="Shin M."/>
            <person name="Vergez L."/>
            <person name="Schmutz J."/>
            <person name="Larimer F."/>
            <person name="Land M."/>
            <person name="Hauser L."/>
            <person name="Pelletier D.A."/>
            <person name="Kyrpides N."/>
            <person name="Lykidis A."/>
            <person name="Oda Y."/>
            <person name="Harwood C.S."/>
            <person name="Richardson P."/>
        </authorList>
    </citation>
    <scope>NUCLEOTIDE SEQUENCE [LARGE SCALE GENOMIC DNA]</scope>
    <source>
        <strain>BisB5</strain>
    </source>
</reference>
<keyword id="KW-0963">Cytoplasm</keyword>
<keyword id="KW-0255">Endonuclease</keyword>
<keyword id="KW-0378">Hydrolase</keyword>
<keyword id="KW-0460">Magnesium</keyword>
<keyword id="KW-0479">Metal-binding</keyword>
<keyword id="KW-0540">Nuclease</keyword>
<organism>
    <name type="scientific">Rhodopseudomonas palustris (strain BisB5)</name>
    <dbReference type="NCBI Taxonomy" id="316057"/>
    <lineage>
        <taxon>Bacteria</taxon>
        <taxon>Pseudomonadati</taxon>
        <taxon>Pseudomonadota</taxon>
        <taxon>Alphaproteobacteria</taxon>
        <taxon>Hyphomicrobiales</taxon>
        <taxon>Nitrobacteraceae</taxon>
        <taxon>Rhodopseudomonas</taxon>
    </lineage>
</organism>
<name>RNH_RHOPS</name>
<sequence>MRPVIIHTDGACSGNPGPGGWGAILKFGDTEKELKGGEAHTTNNRMELLAAISALEALTRPCTVDLYTDSQYVKNGIGSWIHNWKRNGWKTADKKPVKNVDLWQRLDAALKSHEVRWHWVKGHAGHDENERADQLARDGLTKHRLKSRIG</sequence>
<feature type="chain" id="PRO_0000332667" description="Ribonuclease H">
    <location>
        <begin position="1"/>
        <end position="150"/>
    </location>
</feature>
<feature type="domain" description="RNase H type-1" evidence="2">
    <location>
        <begin position="1"/>
        <end position="141"/>
    </location>
</feature>
<feature type="binding site" evidence="1">
    <location>
        <position position="9"/>
    </location>
    <ligand>
        <name>Mg(2+)</name>
        <dbReference type="ChEBI" id="CHEBI:18420"/>
        <label>1</label>
    </ligand>
</feature>
<feature type="binding site" evidence="1">
    <location>
        <position position="9"/>
    </location>
    <ligand>
        <name>Mg(2+)</name>
        <dbReference type="ChEBI" id="CHEBI:18420"/>
        <label>2</label>
    </ligand>
</feature>
<feature type="binding site" evidence="1">
    <location>
        <position position="47"/>
    </location>
    <ligand>
        <name>Mg(2+)</name>
        <dbReference type="ChEBI" id="CHEBI:18420"/>
        <label>1</label>
    </ligand>
</feature>
<feature type="binding site" evidence="1">
    <location>
        <position position="69"/>
    </location>
    <ligand>
        <name>Mg(2+)</name>
        <dbReference type="ChEBI" id="CHEBI:18420"/>
        <label>1</label>
    </ligand>
</feature>
<feature type="binding site" evidence="1">
    <location>
        <position position="133"/>
    </location>
    <ligand>
        <name>Mg(2+)</name>
        <dbReference type="ChEBI" id="CHEBI:18420"/>
        <label>2</label>
    </ligand>
</feature>
<gene>
    <name evidence="1" type="primary">rnhA</name>
    <name type="ordered locus">RPD_4028</name>
</gene>
<dbReference type="EC" id="3.1.26.4" evidence="1"/>
<dbReference type="EMBL" id="CP000283">
    <property type="protein sequence ID" value="ABE41247.1"/>
    <property type="molecule type" value="Genomic_DNA"/>
</dbReference>
<dbReference type="SMR" id="Q131J2"/>
<dbReference type="STRING" id="316057.RPD_4028"/>
<dbReference type="KEGG" id="rpd:RPD_4028"/>
<dbReference type="eggNOG" id="COG0328">
    <property type="taxonomic scope" value="Bacteria"/>
</dbReference>
<dbReference type="HOGENOM" id="CLU_030894_6_0_5"/>
<dbReference type="Proteomes" id="UP000001818">
    <property type="component" value="Chromosome"/>
</dbReference>
<dbReference type="GO" id="GO:0005737">
    <property type="term" value="C:cytoplasm"/>
    <property type="evidence" value="ECO:0007669"/>
    <property type="project" value="UniProtKB-SubCell"/>
</dbReference>
<dbReference type="GO" id="GO:0000287">
    <property type="term" value="F:magnesium ion binding"/>
    <property type="evidence" value="ECO:0007669"/>
    <property type="project" value="UniProtKB-UniRule"/>
</dbReference>
<dbReference type="GO" id="GO:0003676">
    <property type="term" value="F:nucleic acid binding"/>
    <property type="evidence" value="ECO:0007669"/>
    <property type="project" value="InterPro"/>
</dbReference>
<dbReference type="GO" id="GO:0004523">
    <property type="term" value="F:RNA-DNA hybrid ribonuclease activity"/>
    <property type="evidence" value="ECO:0007669"/>
    <property type="project" value="UniProtKB-UniRule"/>
</dbReference>
<dbReference type="GO" id="GO:0043137">
    <property type="term" value="P:DNA replication, removal of RNA primer"/>
    <property type="evidence" value="ECO:0007669"/>
    <property type="project" value="TreeGrafter"/>
</dbReference>
<dbReference type="CDD" id="cd09278">
    <property type="entry name" value="RNase_HI_prokaryote_like"/>
    <property type="match status" value="1"/>
</dbReference>
<dbReference type="FunFam" id="3.30.420.10:FF:000008">
    <property type="entry name" value="Ribonuclease H"/>
    <property type="match status" value="1"/>
</dbReference>
<dbReference type="Gene3D" id="3.30.420.10">
    <property type="entry name" value="Ribonuclease H-like superfamily/Ribonuclease H"/>
    <property type="match status" value="1"/>
</dbReference>
<dbReference type="HAMAP" id="MF_00042">
    <property type="entry name" value="RNase_H"/>
    <property type="match status" value="1"/>
</dbReference>
<dbReference type="InterPro" id="IPR050092">
    <property type="entry name" value="RNase_H"/>
</dbReference>
<dbReference type="InterPro" id="IPR012337">
    <property type="entry name" value="RNaseH-like_sf"/>
</dbReference>
<dbReference type="InterPro" id="IPR002156">
    <property type="entry name" value="RNaseH_domain"/>
</dbReference>
<dbReference type="InterPro" id="IPR036397">
    <property type="entry name" value="RNaseH_sf"/>
</dbReference>
<dbReference type="InterPro" id="IPR022892">
    <property type="entry name" value="RNaseHI"/>
</dbReference>
<dbReference type="NCBIfam" id="NF001236">
    <property type="entry name" value="PRK00203.1"/>
    <property type="match status" value="1"/>
</dbReference>
<dbReference type="PANTHER" id="PTHR10642">
    <property type="entry name" value="RIBONUCLEASE H1"/>
    <property type="match status" value="1"/>
</dbReference>
<dbReference type="PANTHER" id="PTHR10642:SF26">
    <property type="entry name" value="RIBONUCLEASE H1"/>
    <property type="match status" value="1"/>
</dbReference>
<dbReference type="Pfam" id="PF00075">
    <property type="entry name" value="RNase_H"/>
    <property type="match status" value="1"/>
</dbReference>
<dbReference type="SUPFAM" id="SSF53098">
    <property type="entry name" value="Ribonuclease H-like"/>
    <property type="match status" value="1"/>
</dbReference>
<dbReference type="PROSITE" id="PS50879">
    <property type="entry name" value="RNASE_H_1"/>
    <property type="match status" value="1"/>
</dbReference>
<accession>Q131J2</accession>